<name>CCA_NITEU</name>
<comment type="function">
    <text evidence="1">Catalyzes the addition and repair of the essential 3'-terminal CCA sequence in tRNAs without using a nucleic acid template. Adds these three nucleotides in the order of C, C, and A to the tRNA nucleotide-73, using CTP and ATP as substrates and producing inorganic pyrophosphate. tRNA 3'-terminal CCA addition is required both for tRNA processing and repair. Also involved in tRNA surveillance by mediating tandem CCA addition to generate a CCACCA at the 3' terminus of unstable tRNAs. While stable tRNAs receive only 3'-terminal CCA, unstable tRNAs are marked with CCACCA and rapidly degraded.</text>
</comment>
<comment type="catalytic activity">
    <reaction evidence="1">
        <text>a tRNA precursor + 2 CTP + ATP = a tRNA with a 3' CCA end + 3 diphosphate</text>
        <dbReference type="Rhea" id="RHEA:14433"/>
        <dbReference type="Rhea" id="RHEA-COMP:10465"/>
        <dbReference type="Rhea" id="RHEA-COMP:10468"/>
        <dbReference type="ChEBI" id="CHEBI:30616"/>
        <dbReference type="ChEBI" id="CHEBI:33019"/>
        <dbReference type="ChEBI" id="CHEBI:37563"/>
        <dbReference type="ChEBI" id="CHEBI:74896"/>
        <dbReference type="ChEBI" id="CHEBI:83071"/>
        <dbReference type="EC" id="2.7.7.72"/>
    </reaction>
</comment>
<comment type="catalytic activity">
    <reaction evidence="1">
        <text>a tRNA with a 3' CCA end + 2 CTP + ATP = a tRNA with a 3' CCACCA end + 3 diphosphate</text>
        <dbReference type="Rhea" id="RHEA:76235"/>
        <dbReference type="Rhea" id="RHEA-COMP:10468"/>
        <dbReference type="Rhea" id="RHEA-COMP:18655"/>
        <dbReference type="ChEBI" id="CHEBI:30616"/>
        <dbReference type="ChEBI" id="CHEBI:33019"/>
        <dbReference type="ChEBI" id="CHEBI:37563"/>
        <dbReference type="ChEBI" id="CHEBI:83071"/>
        <dbReference type="ChEBI" id="CHEBI:195187"/>
    </reaction>
    <physiologicalReaction direction="left-to-right" evidence="1">
        <dbReference type="Rhea" id="RHEA:76236"/>
    </physiologicalReaction>
</comment>
<comment type="cofactor">
    <cofactor evidence="1">
        <name>Mg(2+)</name>
        <dbReference type="ChEBI" id="CHEBI:18420"/>
    </cofactor>
    <text evidence="1">Magnesium is required for nucleotidyltransferase activity.</text>
</comment>
<comment type="cofactor">
    <cofactor evidence="1">
        <name>Ni(2+)</name>
        <dbReference type="ChEBI" id="CHEBI:49786"/>
    </cofactor>
    <text evidence="1">Nickel for phosphatase activity.</text>
</comment>
<comment type="subunit">
    <text evidence="1">Monomer. Can also form homodimers and oligomers.</text>
</comment>
<comment type="domain">
    <text evidence="1">Comprises two domains: an N-terminal domain containing the nucleotidyltransferase activity and a C-terminal HD domain associated with both phosphodiesterase and phosphatase activities.</text>
</comment>
<comment type="miscellaneous">
    <text evidence="1">A single active site specifically recognizes both ATP and CTP and is responsible for their addition.</text>
</comment>
<comment type="similarity">
    <text evidence="1">Belongs to the tRNA nucleotidyltransferase/poly(A) polymerase family. Bacterial CCA-adding enzyme type 1 subfamily.</text>
</comment>
<keyword id="KW-0067">ATP-binding</keyword>
<keyword id="KW-0378">Hydrolase</keyword>
<keyword id="KW-0460">Magnesium</keyword>
<keyword id="KW-0479">Metal-binding</keyword>
<keyword id="KW-0511">Multifunctional enzyme</keyword>
<keyword id="KW-0533">Nickel</keyword>
<keyword id="KW-0547">Nucleotide-binding</keyword>
<keyword id="KW-0548">Nucleotidyltransferase</keyword>
<keyword id="KW-1185">Reference proteome</keyword>
<keyword id="KW-0692">RNA repair</keyword>
<keyword id="KW-0694">RNA-binding</keyword>
<keyword id="KW-0808">Transferase</keyword>
<keyword id="KW-0819">tRNA processing</keyword>
<protein>
    <recommendedName>
        <fullName evidence="1">Multifunctional CCA protein</fullName>
    </recommendedName>
    <domain>
        <recommendedName>
            <fullName evidence="1">CCA-adding enzyme</fullName>
            <ecNumber evidence="1">2.7.7.72</ecNumber>
        </recommendedName>
        <alternativeName>
            <fullName evidence="1">CCA tRNA nucleotidyltransferase</fullName>
        </alternativeName>
        <alternativeName>
            <fullName evidence="1">tRNA CCA-pyrophosphorylase</fullName>
        </alternativeName>
        <alternativeName>
            <fullName evidence="1">tRNA adenylyl-/cytidylyl-transferase</fullName>
        </alternativeName>
        <alternativeName>
            <fullName evidence="1">tRNA nucleotidyltransferase</fullName>
        </alternativeName>
        <alternativeName>
            <fullName evidence="1">tRNA-NT</fullName>
        </alternativeName>
    </domain>
    <domain>
        <recommendedName>
            <fullName evidence="1">2'-nucleotidase</fullName>
            <ecNumber evidence="1">3.1.3.-</ecNumber>
        </recommendedName>
    </domain>
    <domain>
        <recommendedName>
            <fullName evidence="1">2',3'-cyclic phosphodiesterase</fullName>
            <ecNumber evidence="1">3.1.4.-</ecNumber>
        </recommendedName>
    </domain>
    <domain>
        <recommendedName>
            <fullName evidence="1">Phosphatase</fullName>
            <ecNumber evidence="1">3.1.3.-</ecNumber>
        </recommendedName>
    </domain>
</protein>
<accession>Q82U82</accession>
<proteinExistence type="inferred from homology"/>
<gene>
    <name evidence="1" type="primary">cca</name>
    <name type="ordered locus">NE1614</name>
</gene>
<dbReference type="EC" id="2.7.7.72" evidence="1"/>
<dbReference type="EC" id="3.1.3.-" evidence="1"/>
<dbReference type="EC" id="3.1.4.-" evidence="1"/>
<dbReference type="EMBL" id="AL954747">
    <property type="protein sequence ID" value="CAD85525.1"/>
    <property type="molecule type" value="Genomic_DNA"/>
</dbReference>
<dbReference type="RefSeq" id="WP_011112178.1">
    <property type="nucleotide sequence ID" value="NC_004757.1"/>
</dbReference>
<dbReference type="SMR" id="Q82U82"/>
<dbReference type="STRING" id="228410.NE1614"/>
<dbReference type="DNASU" id="1082566"/>
<dbReference type="GeneID" id="87104782"/>
<dbReference type="KEGG" id="neu:NE1614"/>
<dbReference type="eggNOG" id="COG0617">
    <property type="taxonomic scope" value="Bacteria"/>
</dbReference>
<dbReference type="HOGENOM" id="CLU_015961_1_1_4"/>
<dbReference type="OrthoDB" id="9805698at2"/>
<dbReference type="PhylomeDB" id="Q82U82"/>
<dbReference type="Proteomes" id="UP000001416">
    <property type="component" value="Chromosome"/>
</dbReference>
<dbReference type="GO" id="GO:0005524">
    <property type="term" value="F:ATP binding"/>
    <property type="evidence" value="ECO:0007669"/>
    <property type="project" value="UniProtKB-UniRule"/>
</dbReference>
<dbReference type="GO" id="GO:0004810">
    <property type="term" value="F:CCA tRNA nucleotidyltransferase activity"/>
    <property type="evidence" value="ECO:0007669"/>
    <property type="project" value="UniProtKB-UniRule"/>
</dbReference>
<dbReference type="GO" id="GO:0004112">
    <property type="term" value="F:cyclic-nucleotide phosphodiesterase activity"/>
    <property type="evidence" value="ECO:0007669"/>
    <property type="project" value="UniProtKB-UniRule"/>
</dbReference>
<dbReference type="GO" id="GO:0000287">
    <property type="term" value="F:magnesium ion binding"/>
    <property type="evidence" value="ECO:0007669"/>
    <property type="project" value="UniProtKB-UniRule"/>
</dbReference>
<dbReference type="GO" id="GO:0016791">
    <property type="term" value="F:phosphatase activity"/>
    <property type="evidence" value="ECO:0007669"/>
    <property type="project" value="UniProtKB-UniRule"/>
</dbReference>
<dbReference type="GO" id="GO:0000049">
    <property type="term" value="F:tRNA binding"/>
    <property type="evidence" value="ECO:0007669"/>
    <property type="project" value="UniProtKB-UniRule"/>
</dbReference>
<dbReference type="GO" id="GO:0042245">
    <property type="term" value="P:RNA repair"/>
    <property type="evidence" value="ECO:0007669"/>
    <property type="project" value="UniProtKB-KW"/>
</dbReference>
<dbReference type="GO" id="GO:0001680">
    <property type="term" value="P:tRNA 3'-terminal CCA addition"/>
    <property type="evidence" value="ECO:0007669"/>
    <property type="project" value="UniProtKB-UniRule"/>
</dbReference>
<dbReference type="CDD" id="cd00077">
    <property type="entry name" value="HDc"/>
    <property type="match status" value="1"/>
</dbReference>
<dbReference type="CDD" id="cd05398">
    <property type="entry name" value="NT_ClassII-CCAase"/>
    <property type="match status" value="1"/>
</dbReference>
<dbReference type="Gene3D" id="3.30.460.10">
    <property type="entry name" value="Beta Polymerase, domain 2"/>
    <property type="match status" value="1"/>
</dbReference>
<dbReference type="Gene3D" id="1.10.3090.10">
    <property type="entry name" value="cca-adding enzyme, domain 2"/>
    <property type="match status" value="1"/>
</dbReference>
<dbReference type="HAMAP" id="MF_01261">
    <property type="entry name" value="CCA_bact_type1"/>
    <property type="match status" value="1"/>
</dbReference>
<dbReference type="HAMAP" id="MF_01262">
    <property type="entry name" value="CCA_bact_type2"/>
    <property type="match status" value="1"/>
</dbReference>
<dbReference type="InterPro" id="IPR012006">
    <property type="entry name" value="CCA_bact"/>
</dbReference>
<dbReference type="InterPro" id="IPR003607">
    <property type="entry name" value="HD/PDEase_dom"/>
</dbReference>
<dbReference type="InterPro" id="IPR006674">
    <property type="entry name" value="HD_domain"/>
</dbReference>
<dbReference type="InterPro" id="IPR043519">
    <property type="entry name" value="NT_sf"/>
</dbReference>
<dbReference type="InterPro" id="IPR002646">
    <property type="entry name" value="PolA_pol_head_dom"/>
</dbReference>
<dbReference type="InterPro" id="IPR032828">
    <property type="entry name" value="PolyA_RNA-bd"/>
</dbReference>
<dbReference type="InterPro" id="IPR050124">
    <property type="entry name" value="tRNA_CCA-adding_enzyme"/>
</dbReference>
<dbReference type="NCBIfam" id="NF008137">
    <property type="entry name" value="PRK10885.1"/>
    <property type="match status" value="1"/>
</dbReference>
<dbReference type="PANTHER" id="PTHR47545">
    <property type="entry name" value="MULTIFUNCTIONAL CCA PROTEIN"/>
    <property type="match status" value="1"/>
</dbReference>
<dbReference type="PANTHER" id="PTHR47545:SF1">
    <property type="entry name" value="MULTIFUNCTIONAL CCA PROTEIN"/>
    <property type="match status" value="1"/>
</dbReference>
<dbReference type="Pfam" id="PF01966">
    <property type="entry name" value="HD"/>
    <property type="match status" value="1"/>
</dbReference>
<dbReference type="Pfam" id="PF01743">
    <property type="entry name" value="PolyA_pol"/>
    <property type="match status" value="1"/>
</dbReference>
<dbReference type="Pfam" id="PF12627">
    <property type="entry name" value="PolyA_pol_RNAbd"/>
    <property type="match status" value="1"/>
</dbReference>
<dbReference type="PIRSF" id="PIRSF000813">
    <property type="entry name" value="CCA_bact"/>
    <property type="match status" value="1"/>
</dbReference>
<dbReference type="SUPFAM" id="SSF81301">
    <property type="entry name" value="Nucleotidyltransferase"/>
    <property type="match status" value="1"/>
</dbReference>
<dbReference type="SUPFAM" id="SSF81891">
    <property type="entry name" value="Poly A polymerase C-terminal region-like"/>
    <property type="match status" value="1"/>
</dbReference>
<dbReference type="PROSITE" id="PS51831">
    <property type="entry name" value="HD"/>
    <property type="match status" value="1"/>
</dbReference>
<reference key="1">
    <citation type="journal article" date="2003" name="J. Bacteriol.">
        <title>Complete genome sequence of the ammonia-oxidizing bacterium and obligate chemolithoautotroph Nitrosomonas europaea.</title>
        <authorList>
            <person name="Chain P."/>
            <person name="Lamerdin J.E."/>
            <person name="Larimer F.W."/>
            <person name="Regala W."/>
            <person name="Lao V."/>
            <person name="Land M.L."/>
            <person name="Hauser L."/>
            <person name="Hooper A.B."/>
            <person name="Klotz M.G."/>
            <person name="Norton J."/>
            <person name="Sayavedra-Soto L.A."/>
            <person name="Arciero D.M."/>
            <person name="Hommes N.G."/>
            <person name="Whittaker M.M."/>
            <person name="Arp D.J."/>
        </authorList>
    </citation>
    <scope>NUCLEOTIDE SEQUENCE [LARGE SCALE GENOMIC DNA]</scope>
    <source>
        <strain>ATCC 19718 / CIP 103999 / KCTC 2705 / NBRC 14298</strain>
    </source>
</reference>
<feature type="chain" id="PRO_0000138989" description="Multifunctional CCA protein">
    <location>
        <begin position="1"/>
        <end position="412"/>
    </location>
</feature>
<feature type="domain" description="HD" evidence="1">
    <location>
        <begin position="225"/>
        <end position="326"/>
    </location>
</feature>
<feature type="binding site" evidence="1">
    <location>
        <position position="8"/>
    </location>
    <ligand>
        <name>ATP</name>
        <dbReference type="ChEBI" id="CHEBI:30616"/>
    </ligand>
</feature>
<feature type="binding site" evidence="1">
    <location>
        <position position="8"/>
    </location>
    <ligand>
        <name>CTP</name>
        <dbReference type="ChEBI" id="CHEBI:37563"/>
    </ligand>
</feature>
<feature type="binding site" evidence="1">
    <location>
        <position position="11"/>
    </location>
    <ligand>
        <name>ATP</name>
        <dbReference type="ChEBI" id="CHEBI:30616"/>
    </ligand>
</feature>
<feature type="binding site" evidence="1">
    <location>
        <position position="11"/>
    </location>
    <ligand>
        <name>CTP</name>
        <dbReference type="ChEBI" id="CHEBI:37563"/>
    </ligand>
</feature>
<feature type="binding site" evidence="1">
    <location>
        <position position="21"/>
    </location>
    <ligand>
        <name>Mg(2+)</name>
        <dbReference type="ChEBI" id="CHEBI:18420"/>
    </ligand>
</feature>
<feature type="binding site" evidence="1">
    <location>
        <position position="23"/>
    </location>
    <ligand>
        <name>Mg(2+)</name>
        <dbReference type="ChEBI" id="CHEBI:18420"/>
    </ligand>
</feature>
<feature type="binding site" evidence="1">
    <location>
        <position position="91"/>
    </location>
    <ligand>
        <name>ATP</name>
        <dbReference type="ChEBI" id="CHEBI:30616"/>
    </ligand>
</feature>
<feature type="binding site" evidence="1">
    <location>
        <position position="91"/>
    </location>
    <ligand>
        <name>CTP</name>
        <dbReference type="ChEBI" id="CHEBI:37563"/>
    </ligand>
</feature>
<feature type="binding site" evidence="1">
    <location>
        <position position="137"/>
    </location>
    <ligand>
        <name>ATP</name>
        <dbReference type="ChEBI" id="CHEBI:30616"/>
    </ligand>
</feature>
<feature type="binding site" evidence="1">
    <location>
        <position position="137"/>
    </location>
    <ligand>
        <name>CTP</name>
        <dbReference type="ChEBI" id="CHEBI:37563"/>
    </ligand>
</feature>
<feature type="binding site" evidence="1">
    <location>
        <position position="140"/>
    </location>
    <ligand>
        <name>ATP</name>
        <dbReference type="ChEBI" id="CHEBI:30616"/>
    </ligand>
</feature>
<feature type="binding site" evidence="1">
    <location>
        <position position="140"/>
    </location>
    <ligand>
        <name>CTP</name>
        <dbReference type="ChEBI" id="CHEBI:37563"/>
    </ligand>
</feature>
<organism>
    <name type="scientific">Nitrosomonas europaea (strain ATCC 19718 / CIP 103999 / KCTC 2705 / NBRC 14298)</name>
    <dbReference type="NCBI Taxonomy" id="228410"/>
    <lineage>
        <taxon>Bacteria</taxon>
        <taxon>Pseudomonadati</taxon>
        <taxon>Pseudomonadota</taxon>
        <taxon>Betaproteobacteria</taxon>
        <taxon>Nitrosomonadales</taxon>
        <taxon>Nitrosomonadaceae</taxon>
        <taxon>Nitrosomonas</taxon>
    </lineage>
</organism>
<evidence type="ECO:0000255" key="1">
    <source>
        <dbReference type="HAMAP-Rule" id="MF_01261"/>
    </source>
</evidence>
<sequence length="412" mass="45835">MKIYRVGGSVRDELLGLPVKDQDYVVVGATPEEMVRLGYRPVGKDFPVFLHPETHEQYALARTERKIARGYKGFEVYAAPGVTLQEDLARRDLTINAMARDEAGDIVDPFGGIADLQAGILRHIGPAFVEDPVRVLRVARFAARFGFQIAPETLELMKEIVHTGETEALVPERVWQEIAHGLMESHPSRMFYVLRECGALARILPEVDALFGVPQPAHAHPEIDTGIHVMMVIDHAASKQYPLEVRFAGLTHDLGKGTTSPDEWPRHIGHEARSVELVMGLCERIRVPGESRDLALLVARFHGDVHRALELRPATIADMLQATDAYRKKARFQAFLQACASDFHGRPGFADKPYPQKEHLSRALQVAVDVDAGAIAMQLNQSHAGKADLPMRINRQVYAARVERISSLLSHL</sequence>